<proteinExistence type="inferred from homology"/>
<sequence>MELSYFHVAKDVPSGIKPETSVVIDVLRATTTIACALNNGAEAVQTFADLDNLKEQASCWPLSKRLLLGERGGKKIDGFDLGNSPLAVTSNVVKGKRLFMSTTNGTRSLERVKESKSLYTMSFINRKAVAEKLISNQSKSVLILGSGWEGAYSLEDSLAAGALASFLLNKNPNSVHILNDELSAAVALWSCWENNIEGCLRNATHGKRLERLGNHDDDFTCCSELDKICVVPTQREKGVLCSL</sequence>
<gene>
    <name evidence="1" type="primary">comB</name>
    <name type="ordered locus">Pro_1046</name>
</gene>
<accession>Q7VBP6</accession>
<organism>
    <name type="scientific">Prochlorococcus marinus (strain SARG / CCMP1375 / SS120)</name>
    <dbReference type="NCBI Taxonomy" id="167539"/>
    <lineage>
        <taxon>Bacteria</taxon>
        <taxon>Bacillati</taxon>
        <taxon>Cyanobacteriota</taxon>
        <taxon>Cyanophyceae</taxon>
        <taxon>Synechococcales</taxon>
        <taxon>Prochlorococcaceae</taxon>
        <taxon>Prochlorococcus</taxon>
    </lineage>
</organism>
<reference key="1">
    <citation type="journal article" date="2003" name="Proc. Natl. Acad. Sci. U.S.A.">
        <title>Genome sequence of the cyanobacterium Prochlorococcus marinus SS120, a nearly minimal oxyphototrophic genome.</title>
        <authorList>
            <person name="Dufresne A."/>
            <person name="Salanoubat M."/>
            <person name="Partensky F."/>
            <person name="Artiguenave F."/>
            <person name="Axmann I.M."/>
            <person name="Barbe V."/>
            <person name="Duprat S."/>
            <person name="Galperin M.Y."/>
            <person name="Koonin E.V."/>
            <person name="Le Gall F."/>
            <person name="Makarova K.S."/>
            <person name="Ostrowski M."/>
            <person name="Oztas S."/>
            <person name="Robert C."/>
            <person name="Rogozin I.B."/>
            <person name="Scanlan D.J."/>
            <person name="Tandeau de Marsac N."/>
            <person name="Weissenbach J."/>
            <person name="Wincker P."/>
            <person name="Wolf Y.I."/>
            <person name="Hess W.R."/>
        </authorList>
    </citation>
    <scope>NUCLEOTIDE SEQUENCE [LARGE SCALE GENOMIC DNA]</scope>
    <source>
        <strain>SARG / CCMP1375 / SS120</strain>
    </source>
</reference>
<feature type="chain" id="PRO_0000081470" description="Probable 2-phosphosulfolactate phosphatase">
    <location>
        <begin position="1"/>
        <end position="243"/>
    </location>
</feature>
<comment type="catalytic activity">
    <reaction evidence="1">
        <text>(2R)-O-phospho-3-sulfolactate + H2O = (2R)-3-sulfolactate + phosphate</text>
        <dbReference type="Rhea" id="RHEA:23416"/>
        <dbReference type="ChEBI" id="CHEBI:15377"/>
        <dbReference type="ChEBI" id="CHEBI:15597"/>
        <dbReference type="ChEBI" id="CHEBI:43474"/>
        <dbReference type="ChEBI" id="CHEBI:58738"/>
        <dbReference type="EC" id="3.1.3.71"/>
    </reaction>
</comment>
<comment type="cofactor">
    <cofactor evidence="1">
        <name>Mg(2+)</name>
        <dbReference type="ChEBI" id="CHEBI:18420"/>
    </cofactor>
</comment>
<comment type="similarity">
    <text evidence="1">Belongs to the ComB family.</text>
</comment>
<evidence type="ECO:0000255" key="1">
    <source>
        <dbReference type="HAMAP-Rule" id="MF_00490"/>
    </source>
</evidence>
<name>COMB_PROMA</name>
<protein>
    <recommendedName>
        <fullName evidence="1">Probable 2-phosphosulfolactate phosphatase</fullName>
        <ecNumber evidence="1">3.1.3.71</ecNumber>
    </recommendedName>
</protein>
<dbReference type="EC" id="3.1.3.71" evidence="1"/>
<dbReference type="EMBL" id="AE017126">
    <property type="protein sequence ID" value="AAQ00091.1"/>
    <property type="molecule type" value="Genomic_DNA"/>
</dbReference>
<dbReference type="RefSeq" id="NP_875438.1">
    <property type="nucleotide sequence ID" value="NC_005042.1"/>
</dbReference>
<dbReference type="RefSeq" id="WP_011125198.1">
    <property type="nucleotide sequence ID" value="NC_005042.1"/>
</dbReference>
<dbReference type="SMR" id="Q7VBP6"/>
<dbReference type="STRING" id="167539.Pro_1046"/>
<dbReference type="EnsemblBacteria" id="AAQ00091">
    <property type="protein sequence ID" value="AAQ00091"/>
    <property type="gene ID" value="Pro_1046"/>
</dbReference>
<dbReference type="KEGG" id="pma:Pro_1046"/>
<dbReference type="PATRIC" id="fig|167539.5.peg.1096"/>
<dbReference type="eggNOG" id="COG2045">
    <property type="taxonomic scope" value="Bacteria"/>
</dbReference>
<dbReference type="HOGENOM" id="CLU_070028_0_1_3"/>
<dbReference type="OrthoDB" id="4913at2"/>
<dbReference type="Proteomes" id="UP000001420">
    <property type="component" value="Chromosome"/>
</dbReference>
<dbReference type="GO" id="GO:0050532">
    <property type="term" value="F:2-phosphosulfolactate phosphatase activity"/>
    <property type="evidence" value="ECO:0007669"/>
    <property type="project" value="UniProtKB-UniRule"/>
</dbReference>
<dbReference type="GO" id="GO:0000287">
    <property type="term" value="F:magnesium ion binding"/>
    <property type="evidence" value="ECO:0007669"/>
    <property type="project" value="UniProtKB-UniRule"/>
</dbReference>
<dbReference type="GO" id="GO:0050545">
    <property type="term" value="F:sulfopyruvate decarboxylase activity"/>
    <property type="evidence" value="ECO:0007669"/>
    <property type="project" value="TreeGrafter"/>
</dbReference>
<dbReference type="FunFam" id="3.90.1560.10:FF:000001">
    <property type="entry name" value="Probable 2-phosphosulfolactate phosphatase"/>
    <property type="match status" value="1"/>
</dbReference>
<dbReference type="Gene3D" id="3.90.1560.10">
    <property type="entry name" value="ComB-like"/>
    <property type="match status" value="1"/>
</dbReference>
<dbReference type="HAMAP" id="MF_00490">
    <property type="entry name" value="ComB"/>
    <property type="match status" value="1"/>
</dbReference>
<dbReference type="InterPro" id="IPR005238">
    <property type="entry name" value="ComB-like"/>
</dbReference>
<dbReference type="InterPro" id="IPR036702">
    <property type="entry name" value="ComB-like_sf"/>
</dbReference>
<dbReference type="NCBIfam" id="NF002053">
    <property type="entry name" value="PRK00886.1-2"/>
    <property type="match status" value="1"/>
</dbReference>
<dbReference type="PANTHER" id="PTHR37311">
    <property type="entry name" value="2-PHOSPHOSULFOLACTATE PHOSPHATASE-RELATED"/>
    <property type="match status" value="1"/>
</dbReference>
<dbReference type="PANTHER" id="PTHR37311:SF1">
    <property type="entry name" value="2-PHOSPHOSULFOLACTATE PHOSPHATASE-RELATED"/>
    <property type="match status" value="1"/>
</dbReference>
<dbReference type="Pfam" id="PF04029">
    <property type="entry name" value="2-ph_phosp"/>
    <property type="match status" value="1"/>
</dbReference>
<dbReference type="SUPFAM" id="SSF142823">
    <property type="entry name" value="ComB-like"/>
    <property type="match status" value="1"/>
</dbReference>
<keyword id="KW-0378">Hydrolase</keyword>
<keyword id="KW-0460">Magnesium</keyword>
<keyword id="KW-1185">Reference proteome</keyword>